<keyword id="KW-0238">DNA-binding</keyword>
<keyword id="KW-0479">Metal-binding</keyword>
<keyword id="KW-0539">Nucleus</keyword>
<keyword id="KW-1185">Reference proteome</keyword>
<keyword id="KW-0677">Repeat</keyword>
<keyword id="KW-0804">Transcription</keyword>
<keyword id="KW-0805">Transcription regulation</keyword>
<keyword id="KW-0862">Zinc</keyword>
<keyword id="KW-0863">Zinc-finger</keyword>
<protein>
    <recommendedName>
        <fullName>Oocyte zinc finger protein XlCOF14</fullName>
    </recommendedName>
</protein>
<reference key="1">
    <citation type="journal article" date="1989" name="J. Mol. Biol.">
        <title>Second-order repeats in Xenopus laevis finger proteins.</title>
        <authorList>
            <person name="Nietfeld W."/>
            <person name="El-Baradi T."/>
            <person name="Mentzel H."/>
            <person name="Pieler T."/>
            <person name="Koester M."/>
            <person name="Poeting A."/>
            <person name="Knoechel W."/>
        </authorList>
    </citation>
    <scope>NUCLEOTIDE SEQUENCE</scope>
</reference>
<dbReference type="PIR" id="S06550">
    <property type="entry name" value="S06550"/>
</dbReference>
<dbReference type="SMR" id="P18740"/>
<dbReference type="Proteomes" id="UP000186698">
    <property type="component" value="Unplaced"/>
</dbReference>
<dbReference type="GO" id="GO:0000785">
    <property type="term" value="C:chromatin"/>
    <property type="evidence" value="ECO:0007669"/>
    <property type="project" value="TreeGrafter"/>
</dbReference>
<dbReference type="GO" id="GO:0031519">
    <property type="term" value="C:PcG protein complex"/>
    <property type="evidence" value="ECO:0007669"/>
    <property type="project" value="TreeGrafter"/>
</dbReference>
<dbReference type="GO" id="GO:0005667">
    <property type="term" value="C:transcription regulator complex"/>
    <property type="evidence" value="ECO:0007669"/>
    <property type="project" value="TreeGrafter"/>
</dbReference>
<dbReference type="GO" id="GO:0003700">
    <property type="term" value="F:DNA-binding transcription factor activity"/>
    <property type="evidence" value="ECO:0000318"/>
    <property type="project" value="GO_Central"/>
</dbReference>
<dbReference type="GO" id="GO:0000981">
    <property type="term" value="F:DNA-binding transcription factor activity, RNA polymerase II-specific"/>
    <property type="evidence" value="ECO:0007669"/>
    <property type="project" value="TreeGrafter"/>
</dbReference>
<dbReference type="GO" id="GO:0000978">
    <property type="term" value="F:RNA polymerase II cis-regulatory region sequence-specific DNA binding"/>
    <property type="evidence" value="ECO:0000318"/>
    <property type="project" value="GO_Central"/>
</dbReference>
<dbReference type="GO" id="GO:0008270">
    <property type="term" value="F:zinc ion binding"/>
    <property type="evidence" value="ECO:0007669"/>
    <property type="project" value="UniProtKB-KW"/>
</dbReference>
<dbReference type="GO" id="GO:0006357">
    <property type="term" value="P:regulation of transcription by RNA polymerase II"/>
    <property type="evidence" value="ECO:0000318"/>
    <property type="project" value="GO_Central"/>
</dbReference>
<dbReference type="FunFam" id="3.30.160.60:FF:000508">
    <property type="entry name" value="Myeloid zinc finger 1"/>
    <property type="match status" value="1"/>
</dbReference>
<dbReference type="FunFam" id="3.30.160.60:FF:001290">
    <property type="entry name" value="Zinc finger 45-like"/>
    <property type="match status" value="1"/>
</dbReference>
<dbReference type="FunFam" id="3.30.160.60:FF:001854">
    <property type="entry name" value="Zinc finger protein"/>
    <property type="match status" value="1"/>
</dbReference>
<dbReference type="FunFam" id="3.30.160.60:FF:000759">
    <property type="entry name" value="zinc finger protein 16"/>
    <property type="match status" value="1"/>
</dbReference>
<dbReference type="FunFam" id="3.30.160.60:FF:002343">
    <property type="entry name" value="Zinc finger protein 33A"/>
    <property type="match status" value="1"/>
</dbReference>
<dbReference type="Gene3D" id="3.30.160.60">
    <property type="entry name" value="Classic Zinc Finger"/>
    <property type="match status" value="5"/>
</dbReference>
<dbReference type="InterPro" id="IPR036236">
    <property type="entry name" value="Znf_C2H2_sf"/>
</dbReference>
<dbReference type="InterPro" id="IPR013087">
    <property type="entry name" value="Znf_C2H2_type"/>
</dbReference>
<dbReference type="PANTHER" id="PTHR14003">
    <property type="entry name" value="TRANSCRIPTIONAL REPRESSOR PROTEIN YY"/>
    <property type="match status" value="1"/>
</dbReference>
<dbReference type="PANTHER" id="PTHR14003:SF23">
    <property type="entry name" value="ZINC FINGER PROTEIN 143"/>
    <property type="match status" value="1"/>
</dbReference>
<dbReference type="Pfam" id="PF00096">
    <property type="entry name" value="zf-C2H2"/>
    <property type="match status" value="2"/>
</dbReference>
<dbReference type="Pfam" id="PF13465">
    <property type="entry name" value="zf-H2C2_2"/>
    <property type="match status" value="1"/>
</dbReference>
<dbReference type="SMART" id="SM00355">
    <property type="entry name" value="ZnF_C2H2"/>
    <property type="match status" value="5"/>
</dbReference>
<dbReference type="SUPFAM" id="SSF57667">
    <property type="entry name" value="beta-beta-alpha zinc fingers"/>
    <property type="match status" value="3"/>
</dbReference>
<dbReference type="PROSITE" id="PS00028">
    <property type="entry name" value="ZINC_FINGER_C2H2_1"/>
    <property type="match status" value="5"/>
</dbReference>
<dbReference type="PROSITE" id="PS50157">
    <property type="entry name" value="ZINC_FINGER_C2H2_2"/>
    <property type="match status" value="5"/>
</dbReference>
<comment type="function">
    <text>May be involved in transcriptional regulation.</text>
</comment>
<comment type="subcellular location">
    <subcellularLocation>
        <location evidence="2">Nucleus</location>
    </subcellularLocation>
</comment>
<comment type="similarity">
    <text evidence="2">Belongs to the krueppel C2H2-type zinc-finger protein family.</text>
</comment>
<evidence type="ECO:0000255" key="1">
    <source>
        <dbReference type="PROSITE-ProRule" id="PRU00042"/>
    </source>
</evidence>
<evidence type="ECO:0000305" key="2"/>
<accession>P18740</accession>
<organism>
    <name type="scientific">Xenopus laevis</name>
    <name type="common">African clawed frog</name>
    <dbReference type="NCBI Taxonomy" id="8355"/>
    <lineage>
        <taxon>Eukaryota</taxon>
        <taxon>Metazoa</taxon>
        <taxon>Chordata</taxon>
        <taxon>Craniata</taxon>
        <taxon>Vertebrata</taxon>
        <taxon>Euteleostomi</taxon>
        <taxon>Amphibia</taxon>
        <taxon>Batrachia</taxon>
        <taxon>Anura</taxon>
        <taxon>Pipoidea</taxon>
        <taxon>Pipidae</taxon>
        <taxon>Xenopodinae</taxon>
        <taxon>Xenopus</taxon>
        <taxon>Xenopus</taxon>
    </lineage>
</organism>
<feature type="chain" id="PRO_0000047816" description="Oocyte zinc finger protein XlCOF14">
    <location>
        <begin position="1" status="less than"/>
        <end position="139" status="greater than"/>
    </location>
</feature>
<feature type="zinc finger region" description="C2H2-type 1" evidence="1">
    <location>
        <begin position="6"/>
        <end position="28"/>
    </location>
</feature>
<feature type="zinc finger region" description="C2H2-type 2" evidence="1">
    <location>
        <begin position="33"/>
        <end position="55"/>
    </location>
</feature>
<feature type="zinc finger region" description="C2H2-type 3" evidence="1">
    <location>
        <begin position="61"/>
        <end position="83"/>
    </location>
</feature>
<feature type="zinc finger region" description="C2H2-type 4" evidence="1">
    <location>
        <begin position="89"/>
        <end position="111"/>
    </location>
</feature>
<feature type="zinc finger region" description="C2H2-type 5" evidence="1">
    <location>
        <begin position="117"/>
        <end position="139"/>
    </location>
</feature>
<feature type="non-terminal residue">
    <location>
        <position position="1"/>
    </location>
</feature>
<feature type="non-terminal residue">
    <location>
        <position position="139"/>
    </location>
</feature>
<proteinExistence type="inferred from homology"/>
<sequence>TGKYPFICSECGKSFMDKRYLKIHSNVHSGNTFPCTECGKSFAAKQNLKRHQKIHTGEKPHKCTECGKQFLQKNKLDRHHLSHTGVKPFSCFECGEQFTWKHLLQYHQLSHTGERPFVCSECGKGYKTKASLALHCHIH</sequence>
<name>ZO14_XENLA</name>